<comment type="subunit">
    <text evidence="1">Component of the tRNA-splicing ligase complex.</text>
</comment>
<comment type="subcellular location">
    <subcellularLocation>
        <location evidence="2">Nucleus</location>
    </subcellularLocation>
</comment>
<comment type="similarity">
    <text evidence="4">Belongs to the ashwin family.</text>
</comment>
<dbReference type="EMBL" id="AK081372">
    <property type="protein sequence ID" value="BAC38205.1"/>
    <property type="molecule type" value="mRNA"/>
</dbReference>
<dbReference type="EMBL" id="BC006931">
    <property type="protein sequence ID" value="AAH06931.1"/>
    <property type="molecule type" value="mRNA"/>
</dbReference>
<dbReference type="CCDS" id="CCDS14921.1"/>
<dbReference type="RefSeq" id="NP_598579.1">
    <property type="nucleotide sequence ID" value="NM_133818.1"/>
</dbReference>
<dbReference type="FunCoup" id="Q922M7">
    <property type="interactions" value="3046"/>
</dbReference>
<dbReference type="STRING" id="10090.ENSMUSP00000010434"/>
<dbReference type="iPTMnet" id="Q922M7"/>
<dbReference type="PhosphoSitePlus" id="Q922M7"/>
<dbReference type="jPOST" id="Q922M7"/>
<dbReference type="PaxDb" id="10090-ENSMUSP00000010434"/>
<dbReference type="PeptideAtlas" id="Q922M7"/>
<dbReference type="Pumba" id="Q922M7"/>
<dbReference type="Antibodypedia" id="47531">
    <property type="antibodies" value="149 antibodies from 20 providers"/>
</dbReference>
<dbReference type="DNASU" id="98404"/>
<dbReference type="Ensembl" id="ENSMUST00000010434.8">
    <property type="protein sequence ID" value="ENSMUSP00000010434.8"/>
    <property type="gene ID" value="ENSMUSG00000010290.8"/>
</dbReference>
<dbReference type="GeneID" id="98404"/>
<dbReference type="KEGG" id="mmu:98404"/>
<dbReference type="UCSC" id="uc007avj.1">
    <property type="organism name" value="mouse"/>
</dbReference>
<dbReference type="AGR" id="MGI:2138299"/>
<dbReference type="MGI" id="MGI:2138299">
    <property type="gene designation" value="AI597479"/>
</dbReference>
<dbReference type="VEuPathDB" id="HostDB:ENSMUSG00000010290"/>
<dbReference type="eggNOG" id="ENOG502S0PQ">
    <property type="taxonomic scope" value="Eukaryota"/>
</dbReference>
<dbReference type="GeneTree" id="ENSGT00390000007488"/>
<dbReference type="HOGENOM" id="CLU_104242_0_0_1"/>
<dbReference type="InParanoid" id="Q922M7"/>
<dbReference type="OMA" id="WGKLMEK"/>
<dbReference type="OrthoDB" id="10071059at2759"/>
<dbReference type="PhylomeDB" id="Q922M7"/>
<dbReference type="TreeFam" id="TF332084"/>
<dbReference type="BioGRID-ORCS" id="98404">
    <property type="hits" value="0 hits in 77 CRISPR screens"/>
</dbReference>
<dbReference type="PRO" id="PR:Q922M7"/>
<dbReference type="Proteomes" id="UP000000589">
    <property type="component" value="Chromosome 1"/>
</dbReference>
<dbReference type="RNAct" id="Q922M7">
    <property type="molecule type" value="protein"/>
</dbReference>
<dbReference type="Bgee" id="ENSMUSG00000010290">
    <property type="expression patterns" value="Expressed in interventricular septum and 249 other cell types or tissues"/>
</dbReference>
<dbReference type="GO" id="GO:0005654">
    <property type="term" value="C:nucleoplasm"/>
    <property type="evidence" value="ECO:0007669"/>
    <property type="project" value="Ensembl"/>
</dbReference>
<dbReference type="GO" id="GO:0005634">
    <property type="term" value="C:nucleus"/>
    <property type="evidence" value="ECO:0000250"/>
    <property type="project" value="UniProtKB"/>
</dbReference>
<dbReference type="GO" id="GO:0072669">
    <property type="term" value="C:tRNA-splicing ligase complex"/>
    <property type="evidence" value="ECO:0000250"/>
    <property type="project" value="UniProtKB"/>
</dbReference>
<dbReference type="GO" id="GO:0048598">
    <property type="term" value="P:embryonic morphogenesis"/>
    <property type="evidence" value="ECO:0007669"/>
    <property type="project" value="InterPro"/>
</dbReference>
<dbReference type="InterPro" id="IPR024887">
    <property type="entry name" value="Ashwin"/>
</dbReference>
<dbReference type="PANTHER" id="PTHR28359">
    <property type="entry name" value="ASHWIN"/>
    <property type="match status" value="1"/>
</dbReference>
<dbReference type="PANTHER" id="PTHR28359:SF1">
    <property type="entry name" value="ASHWIN"/>
    <property type="match status" value="1"/>
</dbReference>
<dbReference type="Pfam" id="PF15323">
    <property type="entry name" value="Ashwin"/>
    <property type="match status" value="1"/>
</dbReference>
<sequence length="232" mass="26031">MAGDVGGRSCTDAELLLHPELLSQEFLLLTLEQKNIAVENEVRVNKDNLTDLYVQHAIPLPQRDLPKNRWGKMMEKKREHHEVKNDTKRSSAVDGLRKRPLIVFDGSSTSTSIKVKRTENGADDRLKPLAQIGSTSDAFWKSPNSSSRISPLVLFSNLPVNHKMEHNNNDTQQNHDLMNRKSPSGPVKSPPLSPVGTTPVKLKRAAPKEEAEATNHLKPPEVKRKIQHVTWP</sequence>
<reference key="1">
    <citation type="journal article" date="2005" name="Science">
        <title>The transcriptional landscape of the mammalian genome.</title>
        <authorList>
            <person name="Carninci P."/>
            <person name="Kasukawa T."/>
            <person name="Katayama S."/>
            <person name="Gough J."/>
            <person name="Frith M.C."/>
            <person name="Maeda N."/>
            <person name="Oyama R."/>
            <person name="Ravasi T."/>
            <person name="Lenhard B."/>
            <person name="Wells C."/>
            <person name="Kodzius R."/>
            <person name="Shimokawa K."/>
            <person name="Bajic V.B."/>
            <person name="Brenner S.E."/>
            <person name="Batalov S."/>
            <person name="Forrest A.R."/>
            <person name="Zavolan M."/>
            <person name="Davis M.J."/>
            <person name="Wilming L.G."/>
            <person name="Aidinis V."/>
            <person name="Allen J.E."/>
            <person name="Ambesi-Impiombato A."/>
            <person name="Apweiler R."/>
            <person name="Aturaliya R.N."/>
            <person name="Bailey T.L."/>
            <person name="Bansal M."/>
            <person name="Baxter L."/>
            <person name="Beisel K.W."/>
            <person name="Bersano T."/>
            <person name="Bono H."/>
            <person name="Chalk A.M."/>
            <person name="Chiu K.P."/>
            <person name="Choudhary V."/>
            <person name="Christoffels A."/>
            <person name="Clutterbuck D.R."/>
            <person name="Crowe M.L."/>
            <person name="Dalla E."/>
            <person name="Dalrymple B.P."/>
            <person name="de Bono B."/>
            <person name="Della Gatta G."/>
            <person name="di Bernardo D."/>
            <person name="Down T."/>
            <person name="Engstrom P."/>
            <person name="Fagiolini M."/>
            <person name="Faulkner G."/>
            <person name="Fletcher C.F."/>
            <person name="Fukushima T."/>
            <person name="Furuno M."/>
            <person name="Futaki S."/>
            <person name="Gariboldi M."/>
            <person name="Georgii-Hemming P."/>
            <person name="Gingeras T.R."/>
            <person name="Gojobori T."/>
            <person name="Green R.E."/>
            <person name="Gustincich S."/>
            <person name="Harbers M."/>
            <person name="Hayashi Y."/>
            <person name="Hensch T.K."/>
            <person name="Hirokawa N."/>
            <person name="Hill D."/>
            <person name="Huminiecki L."/>
            <person name="Iacono M."/>
            <person name="Ikeo K."/>
            <person name="Iwama A."/>
            <person name="Ishikawa T."/>
            <person name="Jakt M."/>
            <person name="Kanapin A."/>
            <person name="Katoh M."/>
            <person name="Kawasawa Y."/>
            <person name="Kelso J."/>
            <person name="Kitamura H."/>
            <person name="Kitano H."/>
            <person name="Kollias G."/>
            <person name="Krishnan S.P."/>
            <person name="Kruger A."/>
            <person name="Kummerfeld S.K."/>
            <person name="Kurochkin I.V."/>
            <person name="Lareau L.F."/>
            <person name="Lazarevic D."/>
            <person name="Lipovich L."/>
            <person name="Liu J."/>
            <person name="Liuni S."/>
            <person name="McWilliam S."/>
            <person name="Madan Babu M."/>
            <person name="Madera M."/>
            <person name="Marchionni L."/>
            <person name="Matsuda H."/>
            <person name="Matsuzawa S."/>
            <person name="Miki H."/>
            <person name="Mignone F."/>
            <person name="Miyake S."/>
            <person name="Morris K."/>
            <person name="Mottagui-Tabar S."/>
            <person name="Mulder N."/>
            <person name="Nakano N."/>
            <person name="Nakauchi H."/>
            <person name="Ng P."/>
            <person name="Nilsson R."/>
            <person name="Nishiguchi S."/>
            <person name="Nishikawa S."/>
            <person name="Nori F."/>
            <person name="Ohara O."/>
            <person name="Okazaki Y."/>
            <person name="Orlando V."/>
            <person name="Pang K.C."/>
            <person name="Pavan W.J."/>
            <person name="Pavesi G."/>
            <person name="Pesole G."/>
            <person name="Petrovsky N."/>
            <person name="Piazza S."/>
            <person name="Reed J."/>
            <person name="Reid J.F."/>
            <person name="Ring B.Z."/>
            <person name="Ringwald M."/>
            <person name="Rost B."/>
            <person name="Ruan Y."/>
            <person name="Salzberg S.L."/>
            <person name="Sandelin A."/>
            <person name="Schneider C."/>
            <person name="Schoenbach C."/>
            <person name="Sekiguchi K."/>
            <person name="Semple C.A."/>
            <person name="Seno S."/>
            <person name="Sessa L."/>
            <person name="Sheng Y."/>
            <person name="Shibata Y."/>
            <person name="Shimada H."/>
            <person name="Shimada K."/>
            <person name="Silva D."/>
            <person name="Sinclair B."/>
            <person name="Sperling S."/>
            <person name="Stupka E."/>
            <person name="Sugiura K."/>
            <person name="Sultana R."/>
            <person name="Takenaka Y."/>
            <person name="Taki K."/>
            <person name="Tammoja K."/>
            <person name="Tan S.L."/>
            <person name="Tang S."/>
            <person name="Taylor M.S."/>
            <person name="Tegner J."/>
            <person name="Teichmann S.A."/>
            <person name="Ueda H.R."/>
            <person name="van Nimwegen E."/>
            <person name="Verardo R."/>
            <person name="Wei C.L."/>
            <person name="Yagi K."/>
            <person name="Yamanishi H."/>
            <person name="Zabarovsky E."/>
            <person name="Zhu S."/>
            <person name="Zimmer A."/>
            <person name="Hide W."/>
            <person name="Bult C."/>
            <person name="Grimmond S.M."/>
            <person name="Teasdale R.D."/>
            <person name="Liu E.T."/>
            <person name="Brusic V."/>
            <person name="Quackenbush J."/>
            <person name="Wahlestedt C."/>
            <person name="Mattick J.S."/>
            <person name="Hume D.A."/>
            <person name="Kai C."/>
            <person name="Sasaki D."/>
            <person name="Tomaru Y."/>
            <person name="Fukuda S."/>
            <person name="Kanamori-Katayama M."/>
            <person name="Suzuki M."/>
            <person name="Aoki J."/>
            <person name="Arakawa T."/>
            <person name="Iida J."/>
            <person name="Imamura K."/>
            <person name="Itoh M."/>
            <person name="Kato T."/>
            <person name="Kawaji H."/>
            <person name="Kawagashira N."/>
            <person name="Kawashima T."/>
            <person name="Kojima M."/>
            <person name="Kondo S."/>
            <person name="Konno H."/>
            <person name="Nakano K."/>
            <person name="Ninomiya N."/>
            <person name="Nishio T."/>
            <person name="Okada M."/>
            <person name="Plessy C."/>
            <person name="Shibata K."/>
            <person name="Shiraki T."/>
            <person name="Suzuki S."/>
            <person name="Tagami M."/>
            <person name="Waki K."/>
            <person name="Watahiki A."/>
            <person name="Okamura-Oho Y."/>
            <person name="Suzuki H."/>
            <person name="Kawai J."/>
            <person name="Hayashizaki Y."/>
        </authorList>
    </citation>
    <scope>NUCLEOTIDE SEQUENCE [LARGE SCALE MRNA]</scope>
    <source>
        <strain>C57BL/6J</strain>
        <tissue>Head</tissue>
    </source>
</reference>
<reference key="2">
    <citation type="journal article" date="2004" name="Genome Res.">
        <title>The status, quality, and expansion of the NIH full-length cDNA project: the Mammalian Gene Collection (MGC).</title>
        <authorList>
            <consortium name="The MGC Project Team"/>
        </authorList>
    </citation>
    <scope>NUCLEOTIDE SEQUENCE [LARGE SCALE MRNA]</scope>
    <source>
        <strain>FVB/N</strain>
        <tissue>Mammary tumor</tissue>
    </source>
</reference>
<reference key="3">
    <citation type="journal article" date="2007" name="Proc. Natl. Acad. Sci. U.S.A.">
        <title>Large-scale phosphorylation analysis of mouse liver.</title>
        <authorList>
            <person name="Villen J."/>
            <person name="Beausoleil S.A."/>
            <person name="Gerber S.A."/>
            <person name="Gygi S.P."/>
        </authorList>
    </citation>
    <scope>PHOSPHORYLATION [LARGE SCALE ANALYSIS] AT SER-193</scope>
    <scope>IDENTIFICATION BY MASS SPECTROMETRY [LARGE SCALE ANALYSIS]</scope>
    <source>
        <tissue>Liver</tissue>
    </source>
</reference>
<reference key="4">
    <citation type="journal article" date="2010" name="Cell">
        <title>A tissue-specific atlas of mouse protein phosphorylation and expression.</title>
        <authorList>
            <person name="Huttlin E.L."/>
            <person name="Jedrychowski M.P."/>
            <person name="Elias J.E."/>
            <person name="Goswami T."/>
            <person name="Rad R."/>
            <person name="Beausoleil S.A."/>
            <person name="Villen J."/>
            <person name="Haas W."/>
            <person name="Sowa M.E."/>
            <person name="Gygi S.P."/>
        </authorList>
    </citation>
    <scope>PHOSPHORYLATION [LARGE SCALE ANALYSIS] AT SER-182; SER-189; SER-193 AND THR-197</scope>
    <scope>IDENTIFICATION BY MASS SPECTROMETRY [LARGE SCALE ANALYSIS]</scope>
    <source>
        <tissue>Brain</tissue>
        <tissue>Brown adipose tissue</tissue>
        <tissue>Heart</tissue>
        <tissue>Kidney</tissue>
        <tissue>Lung</tissue>
        <tissue>Spleen</tissue>
        <tissue>Testis</tissue>
    </source>
</reference>
<protein>
    <recommendedName>
        <fullName>Ashwin</fullName>
    </recommendedName>
</protein>
<proteinExistence type="evidence at protein level"/>
<evidence type="ECO:0000250" key="1"/>
<evidence type="ECO:0000250" key="2">
    <source>
        <dbReference type="UniProtKB" id="Q9BVC5"/>
    </source>
</evidence>
<evidence type="ECO:0000256" key="3">
    <source>
        <dbReference type="SAM" id="MobiDB-lite"/>
    </source>
</evidence>
<evidence type="ECO:0000305" key="4"/>
<evidence type="ECO:0007744" key="5">
    <source>
    </source>
</evidence>
<evidence type="ECO:0007744" key="6">
    <source>
    </source>
</evidence>
<accession>Q922M7</accession>
<name>ASHWN_MOUSE</name>
<keyword id="KW-0539">Nucleus</keyword>
<keyword id="KW-0597">Phosphoprotein</keyword>
<keyword id="KW-1185">Reference proteome</keyword>
<organism>
    <name type="scientific">Mus musculus</name>
    <name type="common">Mouse</name>
    <dbReference type="NCBI Taxonomy" id="10090"/>
    <lineage>
        <taxon>Eukaryota</taxon>
        <taxon>Metazoa</taxon>
        <taxon>Chordata</taxon>
        <taxon>Craniata</taxon>
        <taxon>Vertebrata</taxon>
        <taxon>Euteleostomi</taxon>
        <taxon>Mammalia</taxon>
        <taxon>Eutheria</taxon>
        <taxon>Euarchontoglires</taxon>
        <taxon>Glires</taxon>
        <taxon>Rodentia</taxon>
        <taxon>Myomorpha</taxon>
        <taxon>Muroidea</taxon>
        <taxon>Muridae</taxon>
        <taxon>Murinae</taxon>
        <taxon>Mus</taxon>
        <taxon>Mus</taxon>
    </lineage>
</organism>
<feature type="chain" id="PRO_0000268860" description="Ashwin">
    <location>
        <begin position="1"/>
        <end position="232"/>
    </location>
</feature>
<feature type="region of interest" description="Disordered" evidence="3">
    <location>
        <begin position="163"/>
        <end position="232"/>
    </location>
</feature>
<feature type="compositionally biased region" description="Basic and acidic residues" evidence="3">
    <location>
        <begin position="206"/>
        <end position="224"/>
    </location>
</feature>
<feature type="modified residue" description="Phosphoserine" evidence="2">
    <location>
        <position position="112"/>
    </location>
</feature>
<feature type="modified residue" description="Phosphoserine" evidence="6">
    <location>
        <position position="182"/>
    </location>
</feature>
<feature type="modified residue" description="Phosphoserine" evidence="2">
    <location>
        <position position="184"/>
    </location>
</feature>
<feature type="modified residue" description="Phosphoserine" evidence="6">
    <location>
        <position position="189"/>
    </location>
</feature>
<feature type="modified residue" description="Phosphoserine" evidence="5 6">
    <location>
        <position position="193"/>
    </location>
</feature>
<feature type="modified residue" description="Phosphothreonine" evidence="6">
    <location>
        <position position="197"/>
    </location>
</feature>
<feature type="modified residue" description="Phosphothreonine" evidence="2">
    <location>
        <position position="198"/>
    </location>
</feature>